<organism>
    <name type="scientific">Desulfitobacterium hafniense (strain DSM 10664 / DCB-2)</name>
    <dbReference type="NCBI Taxonomy" id="272564"/>
    <lineage>
        <taxon>Bacteria</taxon>
        <taxon>Bacillati</taxon>
        <taxon>Bacillota</taxon>
        <taxon>Clostridia</taxon>
        <taxon>Eubacteriales</taxon>
        <taxon>Desulfitobacteriaceae</taxon>
        <taxon>Desulfitobacterium</taxon>
    </lineage>
</organism>
<proteinExistence type="inferred from homology"/>
<dbReference type="EMBL" id="CP001336">
    <property type="protein sequence ID" value="ACL22789.1"/>
    <property type="molecule type" value="Genomic_DNA"/>
</dbReference>
<dbReference type="SMR" id="B8FZ37"/>
<dbReference type="KEGG" id="dhd:Dhaf_4794"/>
<dbReference type="HOGENOM" id="CLU_085114_1_1_9"/>
<dbReference type="Proteomes" id="UP000007726">
    <property type="component" value="Chromosome"/>
</dbReference>
<dbReference type="GO" id="GO:0005886">
    <property type="term" value="C:plasma membrane"/>
    <property type="evidence" value="ECO:0007669"/>
    <property type="project" value="UniProtKB-SubCell"/>
</dbReference>
<dbReference type="GO" id="GO:0045259">
    <property type="term" value="C:proton-transporting ATP synthase complex"/>
    <property type="evidence" value="ECO:0007669"/>
    <property type="project" value="UniProtKB-KW"/>
</dbReference>
<dbReference type="GO" id="GO:0046933">
    <property type="term" value="F:proton-transporting ATP synthase activity, rotational mechanism"/>
    <property type="evidence" value="ECO:0007669"/>
    <property type="project" value="UniProtKB-UniRule"/>
</dbReference>
<dbReference type="Gene3D" id="1.10.520.20">
    <property type="entry name" value="N-terminal domain of the delta subunit of the F1F0-ATP synthase"/>
    <property type="match status" value="1"/>
</dbReference>
<dbReference type="HAMAP" id="MF_01416">
    <property type="entry name" value="ATP_synth_delta_bact"/>
    <property type="match status" value="1"/>
</dbReference>
<dbReference type="InterPro" id="IPR026015">
    <property type="entry name" value="ATP_synth_OSCP/delta_N_sf"/>
</dbReference>
<dbReference type="InterPro" id="IPR000711">
    <property type="entry name" value="ATPase_OSCP/dsu"/>
</dbReference>
<dbReference type="NCBIfam" id="TIGR01145">
    <property type="entry name" value="ATP_synt_delta"/>
    <property type="match status" value="1"/>
</dbReference>
<dbReference type="NCBIfam" id="NF004402">
    <property type="entry name" value="PRK05758.2-2"/>
    <property type="match status" value="1"/>
</dbReference>
<dbReference type="NCBIfam" id="NF004403">
    <property type="entry name" value="PRK05758.2-4"/>
    <property type="match status" value="1"/>
</dbReference>
<dbReference type="PANTHER" id="PTHR11910">
    <property type="entry name" value="ATP SYNTHASE DELTA CHAIN"/>
    <property type="match status" value="1"/>
</dbReference>
<dbReference type="Pfam" id="PF00213">
    <property type="entry name" value="OSCP"/>
    <property type="match status" value="1"/>
</dbReference>
<dbReference type="PRINTS" id="PR00125">
    <property type="entry name" value="ATPASEDELTA"/>
</dbReference>
<dbReference type="SUPFAM" id="SSF47928">
    <property type="entry name" value="N-terminal domain of the delta subunit of the F1F0-ATP synthase"/>
    <property type="match status" value="1"/>
</dbReference>
<accession>B8FZ37</accession>
<reference key="1">
    <citation type="journal article" date="2012" name="BMC Microbiol.">
        <title>Genome sequence of Desulfitobacterium hafniense DCB-2, a Gram-positive anaerobe capable of dehalogenation and metal reduction.</title>
        <authorList>
            <person name="Kim S.H."/>
            <person name="Harzman C."/>
            <person name="Davis J.K."/>
            <person name="Hutcheson R."/>
            <person name="Broderick J.B."/>
            <person name="Marsh T.L."/>
            <person name="Tiedje J.M."/>
        </authorList>
    </citation>
    <scope>NUCLEOTIDE SEQUENCE [LARGE SCALE GENOMIC DNA]</scope>
    <source>
        <strain>DSM 10664 / DCB-2</strain>
    </source>
</reference>
<evidence type="ECO:0000255" key="1">
    <source>
        <dbReference type="HAMAP-Rule" id="MF_01416"/>
    </source>
</evidence>
<name>ATPD_DESHD</name>
<sequence>MLKGAIAQRYAQALFELAVQENLDGIEAELQELVQCVEQNAEVAHVLYHPHISLSEKKDLMNKIFAGELSVTVRNFLNLLIDRRRQNYLLEIARVFARLADEARNIVEAKVASAIPLSETQEQRLHQELARMTGKNVRMVKEVRPELIGGVMIQIGDRVMDGTVAFKLQRIRQSLSHA</sequence>
<protein>
    <recommendedName>
        <fullName evidence="1">ATP synthase subunit delta</fullName>
    </recommendedName>
    <alternativeName>
        <fullName evidence="1">ATP synthase F(1) sector subunit delta</fullName>
    </alternativeName>
    <alternativeName>
        <fullName evidence="1">F-type ATPase subunit delta</fullName>
        <shortName evidence="1">F-ATPase subunit delta</shortName>
    </alternativeName>
</protein>
<gene>
    <name evidence="1" type="primary">atpH</name>
    <name type="ordered locus">Dhaf_4794</name>
</gene>
<comment type="function">
    <text evidence="1">F(1)F(0) ATP synthase produces ATP from ADP in the presence of a proton or sodium gradient. F-type ATPases consist of two structural domains, F(1) containing the extramembraneous catalytic core and F(0) containing the membrane proton channel, linked together by a central stalk and a peripheral stalk. During catalysis, ATP synthesis in the catalytic domain of F(1) is coupled via a rotary mechanism of the central stalk subunits to proton translocation.</text>
</comment>
<comment type="function">
    <text evidence="1">This protein is part of the stalk that links CF(0) to CF(1). It either transmits conformational changes from CF(0) to CF(1) or is implicated in proton conduction.</text>
</comment>
<comment type="subunit">
    <text evidence="1">F-type ATPases have 2 components, F(1) - the catalytic core - and F(0) - the membrane proton channel. F(1) has five subunits: alpha(3), beta(3), gamma(1), delta(1), epsilon(1). F(0) has three main subunits: a(1), b(2) and c(10-14). The alpha and beta chains form an alternating ring which encloses part of the gamma chain. F(1) is attached to F(0) by a central stalk formed by the gamma and epsilon chains, while a peripheral stalk is formed by the delta and b chains.</text>
</comment>
<comment type="subcellular location">
    <subcellularLocation>
        <location evidence="1">Cell membrane</location>
        <topology evidence="1">Peripheral membrane protein</topology>
    </subcellularLocation>
</comment>
<comment type="similarity">
    <text evidence="1">Belongs to the ATPase delta chain family.</text>
</comment>
<feature type="chain" id="PRO_0000370962" description="ATP synthase subunit delta">
    <location>
        <begin position="1"/>
        <end position="178"/>
    </location>
</feature>
<keyword id="KW-0066">ATP synthesis</keyword>
<keyword id="KW-1003">Cell membrane</keyword>
<keyword id="KW-0139">CF(1)</keyword>
<keyword id="KW-0375">Hydrogen ion transport</keyword>
<keyword id="KW-0406">Ion transport</keyword>
<keyword id="KW-0472">Membrane</keyword>
<keyword id="KW-0813">Transport</keyword>